<name>LYS_MERLU</name>
<feature type="chain" id="PRO_0000389530" description="Lysozyme">
    <location>
        <begin position="1"/>
        <end position="122"/>
    </location>
</feature>
<feature type="domain" description="I-type lysozyme" evidence="3">
    <location>
        <begin position="3"/>
        <end position="118"/>
    </location>
</feature>
<feature type="active site" description="Proton donor" evidence="3">
    <location>
        <position position="18"/>
    </location>
</feature>
<feature type="active site" description="Nucleophile" evidence="3">
    <location>
        <position position="29"/>
    </location>
</feature>
<feature type="binding site" evidence="4 9 10 11">
    <location>
        <begin position="41"/>
        <end position="47"/>
    </location>
    <ligand>
        <name>substrate</name>
    </ligand>
</feature>
<feature type="binding site" evidence="4 9 10 11">
    <location>
        <position position="72"/>
    </location>
    <ligand>
        <name>substrate</name>
    </ligand>
</feature>
<feature type="binding site" evidence="2">
    <location>
        <begin position="93"/>
        <end position="95"/>
    </location>
    <ligand>
        <name>substrate</name>
    </ligand>
</feature>
<feature type="binding site" evidence="4 9 10 11">
    <location>
        <position position="93"/>
    </location>
    <ligand>
        <name>substrate</name>
    </ligand>
</feature>
<feature type="binding site" evidence="4 9 10 11">
    <location>
        <position position="102"/>
    </location>
    <ligand>
        <name>substrate</name>
    </ligand>
</feature>
<feature type="disulfide bond" evidence="3 4 6 10 11">
    <location>
        <begin position="10"/>
        <end position="86"/>
    </location>
</feature>
<feature type="disulfide bond" evidence="3 4 6 10 11">
    <location>
        <begin position="13"/>
        <end position="118"/>
    </location>
</feature>
<feature type="disulfide bond" evidence="3 4 6 10 11">
    <location>
        <begin position="15"/>
        <end position="21"/>
    </location>
</feature>
<feature type="disulfide bond" evidence="3 4 6 10 11">
    <location>
        <begin position="26"/>
        <end position="35"/>
    </location>
</feature>
<feature type="disulfide bond" evidence="3 4 6 10 11">
    <location>
        <begin position="48"/>
        <end position="68"/>
    </location>
</feature>
<feature type="disulfide bond" evidence="3 4 6 10 11">
    <location>
        <begin position="58"/>
        <end position="64"/>
    </location>
</feature>
<feature type="disulfide bond" evidence="3 4 6 10 11">
    <location>
        <begin position="82"/>
        <end position="100"/>
    </location>
</feature>
<feature type="sequence variant" description="In isozyme B." evidence="5">
    <original>I</original>
    <variation>T</variation>
    <location>
        <position position="5"/>
    </location>
</feature>
<feature type="strand" evidence="13">
    <location>
        <begin position="4"/>
        <end position="6"/>
    </location>
</feature>
<feature type="helix" evidence="13">
    <location>
        <begin position="8"/>
        <end position="19"/>
    </location>
</feature>
<feature type="strand" evidence="13">
    <location>
        <begin position="20"/>
        <end position="22"/>
    </location>
</feature>
<feature type="strand" evidence="13">
    <location>
        <begin position="29"/>
        <end position="32"/>
    </location>
</feature>
<feature type="turn" evidence="13">
    <location>
        <begin position="36"/>
        <end position="39"/>
    </location>
</feature>
<feature type="helix" evidence="13">
    <location>
        <begin position="42"/>
        <end position="47"/>
    </location>
</feature>
<feature type="strand" evidence="13">
    <location>
        <begin position="52"/>
        <end position="54"/>
    </location>
</feature>
<feature type="helix" evidence="13">
    <location>
        <begin position="55"/>
        <end position="59"/>
    </location>
</feature>
<feature type="helix" evidence="13">
    <location>
        <begin position="62"/>
        <end position="76"/>
    </location>
</feature>
<feature type="helix" evidence="13">
    <location>
        <begin position="78"/>
        <end position="80"/>
    </location>
</feature>
<feature type="helix" evidence="13">
    <location>
        <begin position="86"/>
        <end position="95"/>
    </location>
</feature>
<feature type="helix" evidence="13">
    <location>
        <begin position="99"/>
        <end position="101"/>
    </location>
</feature>
<feature type="helix" evidence="13">
    <location>
        <begin position="103"/>
        <end position="105"/>
    </location>
</feature>
<feature type="helix" evidence="13">
    <location>
        <begin position="106"/>
        <end position="112"/>
    </location>
</feature>
<keyword id="KW-0002">3D-structure</keyword>
<keyword id="KW-0044">Antibiotic</keyword>
<keyword id="KW-0929">Antimicrobial</keyword>
<keyword id="KW-0081">Bacteriolytic enzyme</keyword>
<keyword id="KW-0903">Direct protein sequencing</keyword>
<keyword id="KW-1015">Disulfide bond</keyword>
<keyword id="KW-0326">Glycosidase</keyword>
<keyword id="KW-0378">Hydrolase</keyword>
<keyword id="KW-0964">Secreted</keyword>
<comment type="function">
    <text evidence="5">Has bacteriolytic activity against Gram-positive bacteria M.luteus. Also has chitinase activity.</text>
</comment>
<comment type="catalytic activity">
    <reaction evidence="5">
        <text>Hydrolysis of (1-&gt;4)-beta-linkages between N-acetylmuramic acid and N-acetyl-D-glucosamine residues in a peptidoglycan and between N-acetyl-D-glucosamine residues in chitodextrins.</text>
        <dbReference type="EC" id="3.2.1.17"/>
    </reaction>
</comment>
<comment type="biophysicochemical properties">
    <phDependence>
        <text evidence="5">Optimum pH is 6.5 at 37 degrees Celsius for bacteriolytic activity. Optimum pH is 3 at 40 degrees Celsius for chitinase activity.</text>
    </phDependence>
</comment>
<comment type="subunit">
    <text evidence="7">Monomer.</text>
</comment>
<comment type="subcellular location">
    <subcellularLocation>
        <location evidence="1">Secreted</location>
    </subcellularLocation>
</comment>
<comment type="mass spectrometry" mass="13376.0" method="MALDI" evidence="5"/>
<comment type="miscellaneous">
    <text evidence="5">Unlike Ruditapes philippinarum lysozyme, catalytic activity is not affected by variation in salt concentrations.</text>
</comment>
<comment type="similarity">
    <text evidence="3">Belongs to the glycosyl hydrolase 22 family. Type-I lysozyme subfamily.</text>
</comment>
<accession>P86383</accession>
<evidence type="ECO:0000250" key="1">
    <source>
        <dbReference type="UniProtKB" id="P83673"/>
    </source>
</evidence>
<evidence type="ECO:0000250" key="2">
    <source>
        <dbReference type="UniProtKB" id="Q8IU26"/>
    </source>
</evidence>
<evidence type="ECO:0000255" key="3">
    <source>
        <dbReference type="PROSITE-ProRule" id="PRU01257"/>
    </source>
</evidence>
<evidence type="ECO:0000269" key="4">
    <source>
    </source>
</evidence>
<evidence type="ECO:0000269" key="5">
    <source>
    </source>
</evidence>
<evidence type="ECO:0000269" key="6">
    <source ref="2"/>
</evidence>
<evidence type="ECO:0000303" key="7">
    <source>
    </source>
</evidence>
<evidence type="ECO:0000305" key="8"/>
<evidence type="ECO:0000305" key="9">
    <source ref="2"/>
</evidence>
<evidence type="ECO:0007744" key="10">
    <source>
        <dbReference type="PDB" id="3AB6"/>
    </source>
</evidence>
<evidence type="ECO:0007744" key="11">
    <source>
        <dbReference type="PDB" id="3AYQ"/>
    </source>
</evidence>
<evidence type="ECO:0007744" key="12">
    <source>
        <dbReference type="PDB" id="4PJ2"/>
    </source>
</evidence>
<evidence type="ECO:0007829" key="13">
    <source>
        <dbReference type="PDB" id="4PJ2"/>
    </source>
</evidence>
<sequence length="122" mass="13377">FAGGIVSQRCLSCICKMESGCRNVGCKMDMGSLSCGYFQIKEAYWIDCGRPGSSWKSCAASSYCASLCVQNYMKRYAKWAGCPLRCEGFAREHNGGPRGCKKGSTIGYWNRLQKISGCHGVQ</sequence>
<reference key="1">
    <citation type="journal article" date="2013" name="Biosci. Biotechnol. Biochem.">
        <title>The complete amino acid sequence and enzymatic properties of an i-type lysozyme isolated from the common orient clam (Meretrix lusoria).</title>
        <authorList>
            <person name="Kuwano Y."/>
            <person name="Yoneda K."/>
            <person name="Kawaguchi Y."/>
            <person name="Araki N."/>
            <person name="Araki T."/>
        </authorList>
    </citation>
    <scope>PROTEIN SEQUENCE (ISOZYMES A AND B)</scope>
    <scope>IDENTIFICATION BY MASS SPECTROMETRY</scope>
    <scope>FUNCTION</scope>
    <scope>CATALYTIC ACTIVITY</scope>
    <scope>BIOPHYSICOCHEMICAL PROPERTIES</scope>
</reference>
<reference evidence="11" key="2">
    <citation type="submission" date="2011-05" db="PDB data bank">
        <title>Crystal structure of inhibitor bound lysozyme from Meretrix lusoria.</title>
        <authorList>
            <person name="Yoneda K."/>
            <person name="Kuwano Y."/>
            <person name="Usui T."/>
            <person name="Ogata M."/>
            <person name="Suzuki A."/>
            <person name="Araki T."/>
        </authorList>
    </citation>
    <scope>X-RAY CRYSTALLOGRAPHY (1.77 ANGSTROMS) IN COMPLEX WITH INHIBITOR</scope>
    <scope>DISULFIDE BONDS</scope>
</reference>
<reference evidence="10" key="3">
    <citation type="journal article" date="2013" name="Acta Crystallogr. F">
        <title>The tertiary structure of an i-type lysozyme isolated from the common orient clam (Meretrix lusoria).</title>
        <authorList>
            <person name="Kuwano Y."/>
            <person name="Yoneda K."/>
            <person name="Kawaguchi Y."/>
            <person name="Araki T."/>
        </authorList>
    </citation>
    <scope>X-RAY CRYSTALLOGRAPHY (1.78 ANGSTROMS) IN COMPLEX WITH SUBSTRATE (ISOZYME B)</scope>
    <scope>DISULFIDE BONDS</scope>
</reference>
<reference evidence="12" key="4">
    <citation type="journal article" date="2015" name="Acta Crystallogr. D">
        <title>The structure of the proteinaceous inhibitor PliI from Aeromonas hydrophila in complex with its target lysozyme.</title>
        <authorList>
            <person name="Leysen S."/>
            <person name="Van Herreweghe J.M."/>
            <person name="Yoneda K."/>
            <person name="Ogata M."/>
            <person name="Usui T."/>
            <person name="Araki T."/>
            <person name="Michiels C.W."/>
            <person name="Strelkov S.V."/>
        </authorList>
    </citation>
    <scope>X-RAY CRYSTALLOGRAPHY (1.24 ANGSTROMS) IN COMPLEX WITH INHIBITOR</scope>
</reference>
<organism>
    <name type="scientific">Meretrix lusoria</name>
    <name type="common">Hard clam</name>
    <name type="synonym">Common Orient clam</name>
    <dbReference type="NCBI Taxonomy" id="74491"/>
    <lineage>
        <taxon>Eukaryota</taxon>
        <taxon>Metazoa</taxon>
        <taxon>Spiralia</taxon>
        <taxon>Lophotrochozoa</taxon>
        <taxon>Mollusca</taxon>
        <taxon>Bivalvia</taxon>
        <taxon>Autobranchia</taxon>
        <taxon>Heteroconchia</taxon>
        <taxon>Euheterodonta</taxon>
        <taxon>Imparidentia</taxon>
        <taxon>Neoheterodontei</taxon>
        <taxon>Venerida</taxon>
        <taxon>Veneroidea</taxon>
        <taxon>Veneridae</taxon>
        <taxon>Meretrix</taxon>
    </lineage>
</organism>
<protein>
    <recommendedName>
        <fullName evidence="7">Lysozyme</fullName>
        <ecNumber evidence="5">3.2.1.17</ecNumber>
    </recommendedName>
    <alternativeName>
        <fullName evidence="1">1,4-beta-N-acetylmuramidase</fullName>
    </alternativeName>
    <alternativeName>
        <fullName evidence="8">Invertebrate-type lysozyme</fullName>
    </alternativeName>
</protein>
<proteinExistence type="evidence at protein level"/>
<dbReference type="EC" id="3.2.1.17" evidence="5"/>
<dbReference type="PDB" id="3AB6">
    <property type="method" value="X-ray"/>
    <property type="resolution" value="1.78 A"/>
    <property type="chains" value="A=1-122"/>
</dbReference>
<dbReference type="PDB" id="3AYQ">
    <property type="method" value="X-ray"/>
    <property type="resolution" value="1.77 A"/>
    <property type="chains" value="A=1-122"/>
</dbReference>
<dbReference type="PDB" id="4PJ2">
    <property type="method" value="X-ray"/>
    <property type="resolution" value="1.24 A"/>
    <property type="chains" value="C/D=1-122"/>
</dbReference>
<dbReference type="PDBsum" id="3AB6"/>
<dbReference type="PDBsum" id="3AYQ"/>
<dbReference type="PDBsum" id="4PJ2"/>
<dbReference type="SMR" id="P86383"/>
<dbReference type="CAZy" id="GH22">
    <property type="family name" value="Glycoside Hydrolase Family 22"/>
</dbReference>
<dbReference type="BRENDA" id="3.2.1.17">
    <property type="organism ID" value="3231"/>
</dbReference>
<dbReference type="EvolutionaryTrace" id="P86383"/>
<dbReference type="GO" id="GO:0005576">
    <property type="term" value="C:extracellular region"/>
    <property type="evidence" value="ECO:0007669"/>
    <property type="project" value="UniProtKB-SubCell"/>
</dbReference>
<dbReference type="GO" id="GO:0004568">
    <property type="term" value="F:chitinase activity"/>
    <property type="evidence" value="ECO:0000314"/>
    <property type="project" value="UniProtKB"/>
</dbReference>
<dbReference type="GO" id="GO:0003796">
    <property type="term" value="F:lysozyme activity"/>
    <property type="evidence" value="ECO:0000314"/>
    <property type="project" value="UniProtKB"/>
</dbReference>
<dbReference type="GO" id="GO:0042742">
    <property type="term" value="P:defense response to bacterium"/>
    <property type="evidence" value="ECO:0007669"/>
    <property type="project" value="UniProtKB-KW"/>
</dbReference>
<dbReference type="GO" id="GO:0031640">
    <property type="term" value="P:killing of cells of another organism"/>
    <property type="evidence" value="ECO:0007669"/>
    <property type="project" value="UniProtKB-KW"/>
</dbReference>
<dbReference type="CDD" id="cd16890">
    <property type="entry name" value="lyz_i"/>
    <property type="match status" value="1"/>
</dbReference>
<dbReference type="FunFam" id="1.10.530.10:FF:000023">
    <property type="entry name" value="Invertebrate-type lysozyme"/>
    <property type="match status" value="1"/>
</dbReference>
<dbReference type="Gene3D" id="1.10.530.10">
    <property type="match status" value="1"/>
</dbReference>
<dbReference type="InterPro" id="IPR008597">
    <property type="entry name" value="Invert_lysozyme"/>
</dbReference>
<dbReference type="InterPro" id="IPR023346">
    <property type="entry name" value="Lysozyme-like_dom_sf"/>
</dbReference>
<dbReference type="PANTHER" id="PTHR11195">
    <property type="entry name" value="DESTABILASE-RELATED"/>
    <property type="match status" value="1"/>
</dbReference>
<dbReference type="PANTHER" id="PTHR11195:SF13">
    <property type="entry name" value="INVERTEBRATE-TYPE LYSOZYME 2-RELATED"/>
    <property type="match status" value="1"/>
</dbReference>
<dbReference type="Pfam" id="PF05497">
    <property type="entry name" value="Destabilase"/>
    <property type="match status" value="1"/>
</dbReference>
<dbReference type="SUPFAM" id="SSF53955">
    <property type="entry name" value="Lysozyme-like"/>
    <property type="match status" value="1"/>
</dbReference>
<dbReference type="PROSITE" id="PS51909">
    <property type="entry name" value="LYSOZYME_I"/>
    <property type="match status" value="1"/>
</dbReference>